<organism>
    <name type="scientific">Mycobacterium bovis (strain ATCC BAA-935 / AF2122/97)</name>
    <dbReference type="NCBI Taxonomy" id="233413"/>
    <lineage>
        <taxon>Bacteria</taxon>
        <taxon>Bacillati</taxon>
        <taxon>Actinomycetota</taxon>
        <taxon>Actinomycetes</taxon>
        <taxon>Mycobacteriales</taxon>
        <taxon>Mycobacteriaceae</taxon>
        <taxon>Mycobacterium</taxon>
        <taxon>Mycobacterium tuberculosis complex</taxon>
    </lineage>
</organism>
<name>Y2112_MYCBO</name>
<proteinExistence type="predicted"/>
<reference key="1">
    <citation type="journal article" date="2003" name="Proc. Natl. Acad. Sci. U.S.A.">
        <title>The complete genome sequence of Mycobacterium bovis.</title>
        <authorList>
            <person name="Garnier T."/>
            <person name="Eiglmeier K."/>
            <person name="Camus J.-C."/>
            <person name="Medina N."/>
            <person name="Mansoor H."/>
            <person name="Pryor M."/>
            <person name="Duthoy S."/>
            <person name="Grondin S."/>
            <person name="Lacroix C."/>
            <person name="Monsempe C."/>
            <person name="Simon S."/>
            <person name="Harris B."/>
            <person name="Atkin R."/>
            <person name="Doggett J."/>
            <person name="Mayes R."/>
            <person name="Keating L."/>
            <person name="Wheeler P.R."/>
            <person name="Parkhill J."/>
            <person name="Barrell B.G."/>
            <person name="Cole S.T."/>
            <person name="Gordon S.V."/>
            <person name="Hewinson R.G."/>
        </authorList>
    </citation>
    <scope>NUCLEOTIDE SEQUENCE [LARGE SCALE GENOMIC DNA]</scope>
    <source>
        <strain>ATCC BAA-935 / AF2122/97</strain>
    </source>
</reference>
<reference key="2">
    <citation type="journal article" date="2017" name="Genome Announc.">
        <title>Updated reference genome sequence and annotation of Mycobacterium bovis AF2122/97.</title>
        <authorList>
            <person name="Malone K.M."/>
            <person name="Farrell D."/>
            <person name="Stuber T.P."/>
            <person name="Schubert O.T."/>
            <person name="Aebersold R."/>
            <person name="Robbe-Austerman S."/>
            <person name="Gordon S.V."/>
        </authorList>
    </citation>
    <scope>NUCLEOTIDE SEQUENCE [LARGE SCALE GENOMIC DNA]</scope>
    <scope>GENOME REANNOTATION</scope>
    <source>
        <strain>ATCC BAA-935 / AF2122/97</strain>
    </source>
</reference>
<gene>
    <name type="ordered locus">BQ2027_MB2112</name>
</gene>
<accession>P64936</accession>
<accession>A0A1R3Y096</accession>
<accession>Q10693</accession>
<accession>X2BJZ0</accession>
<protein>
    <recommendedName>
        <fullName>Uncharacterized protein Mb2112</fullName>
    </recommendedName>
</protein>
<sequence length="101" mass="10960">MSDMCDVVSFVGAAERVLRARFRPSPESGPPVHARRCGWSLGISAETLRRWAGQAEVDSGVVAGVSASRSGSVKTSELEQTIEILKVATSFFARKCDPRHR</sequence>
<keyword id="KW-1185">Reference proteome</keyword>
<dbReference type="EMBL" id="LT708304">
    <property type="protein sequence ID" value="SIU00719.1"/>
    <property type="molecule type" value="Genomic_DNA"/>
</dbReference>
<dbReference type="RefSeq" id="NP_855761.1">
    <property type="nucleotide sequence ID" value="NC_002945.3"/>
</dbReference>
<dbReference type="KEGG" id="mbo:BQ2027_MB2112"/>
<dbReference type="PATRIC" id="fig|233413.5.peg.2322"/>
<dbReference type="Proteomes" id="UP000001419">
    <property type="component" value="Chromosome"/>
</dbReference>
<dbReference type="Gene3D" id="1.10.10.10">
    <property type="entry name" value="Winged helix-like DNA-binding domain superfamily/Winged helix DNA-binding domain"/>
    <property type="match status" value="1"/>
</dbReference>
<dbReference type="InterPro" id="IPR036388">
    <property type="entry name" value="WH-like_DNA-bd_sf"/>
</dbReference>
<feature type="chain" id="PRO_0000103957" description="Uncharacterized protein Mb2112">
    <location>
        <begin position="1"/>
        <end position="101"/>
    </location>
</feature>